<sequence length="117" mass="13345">MSNIIKQIEQEQMKQDVPSFRPGDNVEVKVWVVEGSKKRLQAFEGVVIAIRNRGLHSAFTVRKISNGEGVERVFQTHSPVVDSITVKRRGAVRKAKLYYLRERSGKAARIKERLNAK</sequence>
<organism>
    <name type="scientific">Proteus mirabilis (strain HI4320)</name>
    <dbReference type="NCBI Taxonomy" id="529507"/>
    <lineage>
        <taxon>Bacteria</taxon>
        <taxon>Pseudomonadati</taxon>
        <taxon>Pseudomonadota</taxon>
        <taxon>Gammaproteobacteria</taxon>
        <taxon>Enterobacterales</taxon>
        <taxon>Morganellaceae</taxon>
        <taxon>Proteus</taxon>
    </lineage>
</organism>
<feature type="chain" id="PRO_1000123356" description="Large ribosomal subunit protein bL19">
    <location>
        <begin position="1"/>
        <end position="117"/>
    </location>
</feature>
<accession>B4EUW7</accession>
<reference key="1">
    <citation type="journal article" date="2008" name="J. Bacteriol.">
        <title>Complete genome sequence of uropathogenic Proteus mirabilis, a master of both adherence and motility.</title>
        <authorList>
            <person name="Pearson M.M."/>
            <person name="Sebaihia M."/>
            <person name="Churcher C."/>
            <person name="Quail M.A."/>
            <person name="Seshasayee A.S."/>
            <person name="Luscombe N.M."/>
            <person name="Abdellah Z."/>
            <person name="Arrosmith C."/>
            <person name="Atkin B."/>
            <person name="Chillingworth T."/>
            <person name="Hauser H."/>
            <person name="Jagels K."/>
            <person name="Moule S."/>
            <person name="Mungall K."/>
            <person name="Norbertczak H."/>
            <person name="Rabbinowitsch E."/>
            <person name="Walker D."/>
            <person name="Whithead S."/>
            <person name="Thomson N.R."/>
            <person name="Rather P.N."/>
            <person name="Parkhill J."/>
            <person name="Mobley H.L.T."/>
        </authorList>
    </citation>
    <scope>NUCLEOTIDE SEQUENCE [LARGE SCALE GENOMIC DNA]</scope>
    <source>
        <strain>HI4320</strain>
    </source>
</reference>
<evidence type="ECO:0000255" key="1">
    <source>
        <dbReference type="HAMAP-Rule" id="MF_00402"/>
    </source>
</evidence>
<evidence type="ECO:0000305" key="2"/>
<gene>
    <name evidence="1" type="primary">rplS</name>
    <name type="ordered locus">PMI0386</name>
</gene>
<dbReference type="EMBL" id="AM942759">
    <property type="protein sequence ID" value="CAR40986.1"/>
    <property type="molecule type" value="Genomic_DNA"/>
</dbReference>
<dbReference type="RefSeq" id="WP_004244769.1">
    <property type="nucleotide sequence ID" value="NC_010554.1"/>
</dbReference>
<dbReference type="SMR" id="B4EUW7"/>
<dbReference type="EnsemblBacteria" id="CAR40986">
    <property type="protein sequence ID" value="CAR40986"/>
    <property type="gene ID" value="PMI0386"/>
</dbReference>
<dbReference type="GeneID" id="6801550"/>
<dbReference type="KEGG" id="pmr:PMI0386"/>
<dbReference type="eggNOG" id="COG0335">
    <property type="taxonomic scope" value="Bacteria"/>
</dbReference>
<dbReference type="HOGENOM" id="CLU_103507_2_1_6"/>
<dbReference type="Proteomes" id="UP000008319">
    <property type="component" value="Chromosome"/>
</dbReference>
<dbReference type="GO" id="GO:0022625">
    <property type="term" value="C:cytosolic large ribosomal subunit"/>
    <property type="evidence" value="ECO:0007669"/>
    <property type="project" value="TreeGrafter"/>
</dbReference>
<dbReference type="GO" id="GO:0003735">
    <property type="term" value="F:structural constituent of ribosome"/>
    <property type="evidence" value="ECO:0007669"/>
    <property type="project" value="InterPro"/>
</dbReference>
<dbReference type="GO" id="GO:0006412">
    <property type="term" value="P:translation"/>
    <property type="evidence" value="ECO:0007669"/>
    <property type="project" value="UniProtKB-UniRule"/>
</dbReference>
<dbReference type="FunFam" id="2.30.30.790:FF:000001">
    <property type="entry name" value="50S ribosomal protein L19"/>
    <property type="match status" value="1"/>
</dbReference>
<dbReference type="Gene3D" id="2.30.30.790">
    <property type="match status" value="1"/>
</dbReference>
<dbReference type="HAMAP" id="MF_00402">
    <property type="entry name" value="Ribosomal_bL19"/>
    <property type="match status" value="1"/>
</dbReference>
<dbReference type="InterPro" id="IPR001857">
    <property type="entry name" value="Ribosomal_bL19"/>
</dbReference>
<dbReference type="InterPro" id="IPR018257">
    <property type="entry name" value="Ribosomal_bL19_CS"/>
</dbReference>
<dbReference type="InterPro" id="IPR038657">
    <property type="entry name" value="Ribosomal_bL19_sf"/>
</dbReference>
<dbReference type="InterPro" id="IPR008991">
    <property type="entry name" value="Translation_prot_SH3-like_sf"/>
</dbReference>
<dbReference type="NCBIfam" id="TIGR01024">
    <property type="entry name" value="rplS_bact"/>
    <property type="match status" value="1"/>
</dbReference>
<dbReference type="PANTHER" id="PTHR15680:SF9">
    <property type="entry name" value="LARGE RIBOSOMAL SUBUNIT PROTEIN BL19M"/>
    <property type="match status" value="1"/>
</dbReference>
<dbReference type="PANTHER" id="PTHR15680">
    <property type="entry name" value="RIBOSOMAL PROTEIN L19"/>
    <property type="match status" value="1"/>
</dbReference>
<dbReference type="Pfam" id="PF01245">
    <property type="entry name" value="Ribosomal_L19"/>
    <property type="match status" value="1"/>
</dbReference>
<dbReference type="PIRSF" id="PIRSF002191">
    <property type="entry name" value="Ribosomal_L19"/>
    <property type="match status" value="1"/>
</dbReference>
<dbReference type="PRINTS" id="PR00061">
    <property type="entry name" value="RIBOSOMALL19"/>
</dbReference>
<dbReference type="SUPFAM" id="SSF50104">
    <property type="entry name" value="Translation proteins SH3-like domain"/>
    <property type="match status" value="1"/>
</dbReference>
<dbReference type="PROSITE" id="PS01015">
    <property type="entry name" value="RIBOSOMAL_L19"/>
    <property type="match status" value="1"/>
</dbReference>
<proteinExistence type="inferred from homology"/>
<comment type="function">
    <text evidence="1">This protein is located at the 30S-50S ribosomal subunit interface and may play a role in the structure and function of the aminoacyl-tRNA binding site.</text>
</comment>
<comment type="similarity">
    <text evidence="1">Belongs to the bacterial ribosomal protein bL19 family.</text>
</comment>
<name>RL19_PROMH</name>
<keyword id="KW-1185">Reference proteome</keyword>
<keyword id="KW-0687">Ribonucleoprotein</keyword>
<keyword id="KW-0689">Ribosomal protein</keyword>
<protein>
    <recommendedName>
        <fullName evidence="1">Large ribosomal subunit protein bL19</fullName>
    </recommendedName>
    <alternativeName>
        <fullName evidence="2">50S ribosomal protein L19</fullName>
    </alternativeName>
</protein>